<comment type="function">
    <text evidence="1">DNA ligase that catalyzes the formation of phosphodiester linkages between 5'-phosphoryl and 3'-hydroxyl groups in double-stranded DNA using NAD as a coenzyme and as the energy source for the reaction. It is essential for DNA replication and repair of damaged DNA.</text>
</comment>
<comment type="catalytic activity">
    <reaction evidence="1">
        <text>NAD(+) + (deoxyribonucleotide)n-3'-hydroxyl + 5'-phospho-(deoxyribonucleotide)m = (deoxyribonucleotide)n+m + AMP + beta-nicotinamide D-nucleotide.</text>
        <dbReference type="EC" id="6.5.1.2"/>
    </reaction>
</comment>
<comment type="cofactor">
    <cofactor evidence="1">
        <name>Mg(2+)</name>
        <dbReference type="ChEBI" id="CHEBI:18420"/>
    </cofactor>
    <cofactor evidence="1">
        <name>Mn(2+)</name>
        <dbReference type="ChEBI" id="CHEBI:29035"/>
    </cofactor>
</comment>
<comment type="similarity">
    <text evidence="1">Belongs to the NAD-dependent DNA ligase family. LigA subfamily.</text>
</comment>
<evidence type="ECO:0000255" key="1">
    <source>
        <dbReference type="HAMAP-Rule" id="MF_01588"/>
    </source>
</evidence>
<protein>
    <recommendedName>
        <fullName evidence="1">DNA ligase</fullName>
        <ecNumber evidence="1">6.5.1.2</ecNumber>
    </recommendedName>
    <alternativeName>
        <fullName evidence="1">Polydeoxyribonucleotide synthase [NAD(+)]</fullName>
    </alternativeName>
</protein>
<dbReference type="EC" id="6.5.1.2" evidence="1"/>
<dbReference type="EMBL" id="AM942759">
    <property type="protein sequence ID" value="CAR43788.1"/>
    <property type="molecule type" value="Genomic_DNA"/>
</dbReference>
<dbReference type="RefSeq" id="WP_004248419.1">
    <property type="nucleotide sequence ID" value="NC_010554.1"/>
</dbReference>
<dbReference type="SMR" id="B4EZR2"/>
<dbReference type="EnsemblBacteria" id="CAR43788">
    <property type="protein sequence ID" value="CAR43788"/>
    <property type="gene ID" value="PMI1823"/>
</dbReference>
<dbReference type="GeneID" id="6802264"/>
<dbReference type="KEGG" id="pmr:PMI1823"/>
<dbReference type="eggNOG" id="COG0272">
    <property type="taxonomic scope" value="Bacteria"/>
</dbReference>
<dbReference type="HOGENOM" id="CLU_007764_2_1_6"/>
<dbReference type="Proteomes" id="UP000008319">
    <property type="component" value="Chromosome"/>
</dbReference>
<dbReference type="GO" id="GO:0005829">
    <property type="term" value="C:cytosol"/>
    <property type="evidence" value="ECO:0007669"/>
    <property type="project" value="TreeGrafter"/>
</dbReference>
<dbReference type="GO" id="GO:0003677">
    <property type="term" value="F:DNA binding"/>
    <property type="evidence" value="ECO:0007669"/>
    <property type="project" value="InterPro"/>
</dbReference>
<dbReference type="GO" id="GO:0003911">
    <property type="term" value="F:DNA ligase (NAD+) activity"/>
    <property type="evidence" value="ECO:0007669"/>
    <property type="project" value="UniProtKB-UniRule"/>
</dbReference>
<dbReference type="GO" id="GO:0046872">
    <property type="term" value="F:metal ion binding"/>
    <property type="evidence" value="ECO:0007669"/>
    <property type="project" value="UniProtKB-KW"/>
</dbReference>
<dbReference type="GO" id="GO:0006281">
    <property type="term" value="P:DNA repair"/>
    <property type="evidence" value="ECO:0007669"/>
    <property type="project" value="UniProtKB-KW"/>
</dbReference>
<dbReference type="GO" id="GO:0006260">
    <property type="term" value="P:DNA replication"/>
    <property type="evidence" value="ECO:0007669"/>
    <property type="project" value="UniProtKB-KW"/>
</dbReference>
<dbReference type="CDD" id="cd17748">
    <property type="entry name" value="BRCT_DNA_ligase_like"/>
    <property type="match status" value="1"/>
</dbReference>
<dbReference type="CDD" id="cd00114">
    <property type="entry name" value="LIGANc"/>
    <property type="match status" value="1"/>
</dbReference>
<dbReference type="FunFam" id="1.10.150.20:FF:000006">
    <property type="entry name" value="DNA ligase"/>
    <property type="match status" value="1"/>
</dbReference>
<dbReference type="FunFam" id="1.10.150.20:FF:000007">
    <property type="entry name" value="DNA ligase"/>
    <property type="match status" value="1"/>
</dbReference>
<dbReference type="FunFam" id="1.10.287.610:FF:000002">
    <property type="entry name" value="DNA ligase"/>
    <property type="match status" value="1"/>
</dbReference>
<dbReference type="FunFam" id="2.40.50.140:FF:000012">
    <property type="entry name" value="DNA ligase"/>
    <property type="match status" value="1"/>
</dbReference>
<dbReference type="FunFam" id="3.30.470.30:FF:000001">
    <property type="entry name" value="DNA ligase"/>
    <property type="match status" value="1"/>
</dbReference>
<dbReference type="FunFam" id="3.40.50.10190:FF:000004">
    <property type="entry name" value="DNA ligase"/>
    <property type="match status" value="1"/>
</dbReference>
<dbReference type="FunFam" id="6.20.10.30:FF:000001">
    <property type="entry name" value="DNA ligase"/>
    <property type="match status" value="1"/>
</dbReference>
<dbReference type="Gene3D" id="6.20.10.30">
    <property type="match status" value="1"/>
</dbReference>
<dbReference type="Gene3D" id="1.10.150.20">
    <property type="entry name" value="5' to 3' exonuclease, C-terminal subdomain"/>
    <property type="match status" value="2"/>
</dbReference>
<dbReference type="Gene3D" id="3.40.50.10190">
    <property type="entry name" value="BRCT domain"/>
    <property type="match status" value="1"/>
</dbReference>
<dbReference type="Gene3D" id="3.30.470.30">
    <property type="entry name" value="DNA ligase/mRNA capping enzyme"/>
    <property type="match status" value="1"/>
</dbReference>
<dbReference type="Gene3D" id="1.10.287.610">
    <property type="entry name" value="Helix hairpin bin"/>
    <property type="match status" value="1"/>
</dbReference>
<dbReference type="Gene3D" id="2.40.50.140">
    <property type="entry name" value="Nucleic acid-binding proteins"/>
    <property type="match status" value="1"/>
</dbReference>
<dbReference type="HAMAP" id="MF_01588">
    <property type="entry name" value="DNA_ligase_A"/>
    <property type="match status" value="1"/>
</dbReference>
<dbReference type="InterPro" id="IPR001357">
    <property type="entry name" value="BRCT_dom"/>
</dbReference>
<dbReference type="InterPro" id="IPR036420">
    <property type="entry name" value="BRCT_dom_sf"/>
</dbReference>
<dbReference type="InterPro" id="IPR041663">
    <property type="entry name" value="DisA/LigA_HHH"/>
</dbReference>
<dbReference type="InterPro" id="IPR001679">
    <property type="entry name" value="DNA_ligase"/>
</dbReference>
<dbReference type="InterPro" id="IPR018239">
    <property type="entry name" value="DNA_ligase_AS"/>
</dbReference>
<dbReference type="InterPro" id="IPR033136">
    <property type="entry name" value="DNA_ligase_CS"/>
</dbReference>
<dbReference type="InterPro" id="IPR013839">
    <property type="entry name" value="DNAligase_adenylation"/>
</dbReference>
<dbReference type="InterPro" id="IPR013840">
    <property type="entry name" value="DNAligase_N"/>
</dbReference>
<dbReference type="InterPro" id="IPR003583">
    <property type="entry name" value="Hlx-hairpin-Hlx_DNA-bd_motif"/>
</dbReference>
<dbReference type="InterPro" id="IPR012340">
    <property type="entry name" value="NA-bd_OB-fold"/>
</dbReference>
<dbReference type="InterPro" id="IPR004150">
    <property type="entry name" value="NAD_DNA_ligase_OB"/>
</dbReference>
<dbReference type="InterPro" id="IPR010994">
    <property type="entry name" value="RuvA_2-like"/>
</dbReference>
<dbReference type="InterPro" id="IPR004149">
    <property type="entry name" value="Znf_DNAligase_C4"/>
</dbReference>
<dbReference type="NCBIfam" id="TIGR00575">
    <property type="entry name" value="dnlj"/>
    <property type="match status" value="1"/>
</dbReference>
<dbReference type="NCBIfam" id="NF005932">
    <property type="entry name" value="PRK07956.1"/>
    <property type="match status" value="1"/>
</dbReference>
<dbReference type="PANTHER" id="PTHR23389">
    <property type="entry name" value="CHROMOSOME TRANSMISSION FIDELITY FACTOR 18"/>
    <property type="match status" value="1"/>
</dbReference>
<dbReference type="PANTHER" id="PTHR23389:SF9">
    <property type="entry name" value="DNA LIGASE"/>
    <property type="match status" value="1"/>
</dbReference>
<dbReference type="Pfam" id="PF00533">
    <property type="entry name" value="BRCT"/>
    <property type="match status" value="1"/>
</dbReference>
<dbReference type="Pfam" id="PF01653">
    <property type="entry name" value="DNA_ligase_aden"/>
    <property type="match status" value="1"/>
</dbReference>
<dbReference type="Pfam" id="PF03120">
    <property type="entry name" value="DNA_ligase_OB"/>
    <property type="match status" value="1"/>
</dbReference>
<dbReference type="Pfam" id="PF03119">
    <property type="entry name" value="DNA_ligase_ZBD"/>
    <property type="match status" value="1"/>
</dbReference>
<dbReference type="Pfam" id="PF12826">
    <property type="entry name" value="HHH_2"/>
    <property type="match status" value="1"/>
</dbReference>
<dbReference type="Pfam" id="PF14520">
    <property type="entry name" value="HHH_5"/>
    <property type="match status" value="1"/>
</dbReference>
<dbReference type="Pfam" id="PF22745">
    <property type="entry name" value="Nlig-Ia"/>
    <property type="match status" value="1"/>
</dbReference>
<dbReference type="PIRSF" id="PIRSF001604">
    <property type="entry name" value="LigA"/>
    <property type="match status" value="1"/>
</dbReference>
<dbReference type="SMART" id="SM00292">
    <property type="entry name" value="BRCT"/>
    <property type="match status" value="1"/>
</dbReference>
<dbReference type="SMART" id="SM00278">
    <property type="entry name" value="HhH1"/>
    <property type="match status" value="4"/>
</dbReference>
<dbReference type="SMART" id="SM00532">
    <property type="entry name" value="LIGANc"/>
    <property type="match status" value="1"/>
</dbReference>
<dbReference type="SUPFAM" id="SSF52113">
    <property type="entry name" value="BRCT domain"/>
    <property type="match status" value="1"/>
</dbReference>
<dbReference type="SUPFAM" id="SSF56091">
    <property type="entry name" value="DNA ligase/mRNA capping enzyme, catalytic domain"/>
    <property type="match status" value="1"/>
</dbReference>
<dbReference type="SUPFAM" id="SSF50249">
    <property type="entry name" value="Nucleic acid-binding proteins"/>
    <property type="match status" value="1"/>
</dbReference>
<dbReference type="SUPFAM" id="SSF47781">
    <property type="entry name" value="RuvA domain 2-like"/>
    <property type="match status" value="1"/>
</dbReference>
<dbReference type="PROSITE" id="PS50172">
    <property type="entry name" value="BRCT"/>
    <property type="match status" value="1"/>
</dbReference>
<dbReference type="PROSITE" id="PS01055">
    <property type="entry name" value="DNA_LIGASE_N1"/>
    <property type="match status" value="1"/>
</dbReference>
<dbReference type="PROSITE" id="PS01056">
    <property type="entry name" value="DNA_LIGASE_N2"/>
    <property type="match status" value="1"/>
</dbReference>
<sequence>MNQNIQQQIDELRVTLRHHEYLYHVMDAPEIPDAEYDRLMNKLKALEAEHPELITPDSPTQRVGALPLTAFEQVRHEIPMLSLDNAFDETTYLAFDKRLRERLKNNEEITFCCELKLDGLAVSLLYENGRLVQAATRGDGTTGENITENVRTIKAIPLRLYGDNIPARIEIRGEVFMTEKGFEHLNEEARRTGGKVFANPRNAAAGSLRQLDPRITAKRPLTFFCYGVGVLEGGELPTSHYARLQQFKKWGLPVSDAIKLCTGTKAVLDFYHHVAEIRPNLGFDIDGVVIKVDDIALQEELGFVSRAPRWAIAYKFQAQEQMTVIKDVEFQVGRTGAITPVARLDPVQVAGVIVSNATLHNADEIERLGLRIGDTVVIRRAGDVIPQVVSVIEEKRPENAQEIVFPTQCPICQSDIERIEGEAVARCTGGLICAAQRKEALKHFVSRRAMDVDGMGDKIIDQLVEKEYVKTPADLFRLDEKILSGLERMGEKSAKKLLNALEKAKSTTFARFIYALGIREVGEATANGLTAHFVSLEALREANIEALKAVPDVGDIVAKHVVNFFQEEHNKNVIDQLVNDIGITWPAPVVATHEAGDNPFAGKTVVLTGSLSQLTRDEAKDRLVALGAKVSGSVSKKTDMVIAGEAAGSKLAKANELGITVIDEDEMIRLLDQSK</sequence>
<proteinExistence type="inferred from homology"/>
<accession>B4EZR2</accession>
<gene>
    <name evidence="1" type="primary">ligA</name>
    <name type="ordered locus">PMI1823</name>
</gene>
<name>DNLJ_PROMH</name>
<organism>
    <name type="scientific">Proteus mirabilis (strain HI4320)</name>
    <dbReference type="NCBI Taxonomy" id="529507"/>
    <lineage>
        <taxon>Bacteria</taxon>
        <taxon>Pseudomonadati</taxon>
        <taxon>Pseudomonadota</taxon>
        <taxon>Gammaproteobacteria</taxon>
        <taxon>Enterobacterales</taxon>
        <taxon>Morganellaceae</taxon>
        <taxon>Proteus</taxon>
    </lineage>
</organism>
<keyword id="KW-0227">DNA damage</keyword>
<keyword id="KW-0234">DNA repair</keyword>
<keyword id="KW-0235">DNA replication</keyword>
<keyword id="KW-0436">Ligase</keyword>
<keyword id="KW-0460">Magnesium</keyword>
<keyword id="KW-0464">Manganese</keyword>
<keyword id="KW-0479">Metal-binding</keyword>
<keyword id="KW-0520">NAD</keyword>
<keyword id="KW-1185">Reference proteome</keyword>
<keyword id="KW-0862">Zinc</keyword>
<feature type="chain" id="PRO_0000380446" description="DNA ligase">
    <location>
        <begin position="1"/>
        <end position="675"/>
    </location>
</feature>
<feature type="domain" description="BRCT" evidence="1">
    <location>
        <begin position="595"/>
        <end position="675"/>
    </location>
</feature>
<feature type="active site" description="N6-AMP-lysine intermediate" evidence="1">
    <location>
        <position position="116"/>
    </location>
</feature>
<feature type="binding site" evidence="1">
    <location>
        <begin position="33"/>
        <end position="37"/>
    </location>
    <ligand>
        <name>NAD(+)</name>
        <dbReference type="ChEBI" id="CHEBI:57540"/>
    </ligand>
</feature>
<feature type="binding site" evidence="1">
    <location>
        <begin position="82"/>
        <end position="83"/>
    </location>
    <ligand>
        <name>NAD(+)</name>
        <dbReference type="ChEBI" id="CHEBI:57540"/>
    </ligand>
</feature>
<feature type="binding site" evidence="1">
    <location>
        <position position="114"/>
    </location>
    <ligand>
        <name>NAD(+)</name>
        <dbReference type="ChEBI" id="CHEBI:57540"/>
    </ligand>
</feature>
<feature type="binding site" evidence="1">
    <location>
        <position position="137"/>
    </location>
    <ligand>
        <name>NAD(+)</name>
        <dbReference type="ChEBI" id="CHEBI:57540"/>
    </ligand>
</feature>
<feature type="binding site" evidence="1">
    <location>
        <position position="174"/>
    </location>
    <ligand>
        <name>NAD(+)</name>
        <dbReference type="ChEBI" id="CHEBI:57540"/>
    </ligand>
</feature>
<feature type="binding site" evidence="1">
    <location>
        <position position="291"/>
    </location>
    <ligand>
        <name>NAD(+)</name>
        <dbReference type="ChEBI" id="CHEBI:57540"/>
    </ligand>
</feature>
<feature type="binding site" evidence="1">
    <location>
        <position position="315"/>
    </location>
    <ligand>
        <name>NAD(+)</name>
        <dbReference type="ChEBI" id="CHEBI:57540"/>
    </ligand>
</feature>
<feature type="binding site" evidence="1">
    <location>
        <position position="409"/>
    </location>
    <ligand>
        <name>Zn(2+)</name>
        <dbReference type="ChEBI" id="CHEBI:29105"/>
    </ligand>
</feature>
<feature type="binding site" evidence="1">
    <location>
        <position position="412"/>
    </location>
    <ligand>
        <name>Zn(2+)</name>
        <dbReference type="ChEBI" id="CHEBI:29105"/>
    </ligand>
</feature>
<feature type="binding site" evidence="1">
    <location>
        <position position="427"/>
    </location>
    <ligand>
        <name>Zn(2+)</name>
        <dbReference type="ChEBI" id="CHEBI:29105"/>
    </ligand>
</feature>
<feature type="binding site" evidence="1">
    <location>
        <position position="433"/>
    </location>
    <ligand>
        <name>Zn(2+)</name>
        <dbReference type="ChEBI" id="CHEBI:29105"/>
    </ligand>
</feature>
<reference key="1">
    <citation type="journal article" date="2008" name="J. Bacteriol.">
        <title>Complete genome sequence of uropathogenic Proteus mirabilis, a master of both adherence and motility.</title>
        <authorList>
            <person name="Pearson M.M."/>
            <person name="Sebaihia M."/>
            <person name="Churcher C."/>
            <person name="Quail M.A."/>
            <person name="Seshasayee A.S."/>
            <person name="Luscombe N.M."/>
            <person name="Abdellah Z."/>
            <person name="Arrosmith C."/>
            <person name="Atkin B."/>
            <person name="Chillingworth T."/>
            <person name="Hauser H."/>
            <person name="Jagels K."/>
            <person name="Moule S."/>
            <person name="Mungall K."/>
            <person name="Norbertczak H."/>
            <person name="Rabbinowitsch E."/>
            <person name="Walker D."/>
            <person name="Whithead S."/>
            <person name="Thomson N.R."/>
            <person name="Rather P.N."/>
            <person name="Parkhill J."/>
            <person name="Mobley H.L.T."/>
        </authorList>
    </citation>
    <scope>NUCLEOTIDE SEQUENCE [LARGE SCALE GENOMIC DNA]</scope>
    <source>
        <strain>HI4320</strain>
    </source>
</reference>